<feature type="chain" id="PRO_0000213299" description="Protein SprT-like">
    <location>
        <begin position="1"/>
        <end position="151"/>
    </location>
</feature>
<feature type="domain" description="SprT-like" evidence="1">
    <location>
        <begin position="6"/>
        <end position="147"/>
    </location>
</feature>
<feature type="active site" evidence="1">
    <location>
        <position position="68"/>
    </location>
</feature>
<feature type="binding site" evidence="1">
    <location>
        <position position="67"/>
    </location>
    <ligand>
        <name>Zn(2+)</name>
        <dbReference type="ChEBI" id="CHEBI:29105"/>
    </ligand>
</feature>
<feature type="binding site" evidence="1">
    <location>
        <position position="71"/>
    </location>
    <ligand>
        <name>Zn(2+)</name>
        <dbReference type="ChEBI" id="CHEBI:29105"/>
    </ligand>
</feature>
<sequence length="151" mass="18210">MNNEILQRMVENLSEEKFGRTFQHRAYFNKRLRTTGGRYLLKSHDIEINPKQYEHYGEDAVVKIILHELCHYHLHIAGKGYQHKDQDFKRLSQQVGAPRFCNSIESYQQRANYEYYCTKCHAKYIRIRKVDTNRMRCGHCNGKLRMKRQLK</sequence>
<organism>
    <name type="scientific">Staphylococcus aureus (strain MRSA252)</name>
    <dbReference type="NCBI Taxonomy" id="282458"/>
    <lineage>
        <taxon>Bacteria</taxon>
        <taxon>Bacillati</taxon>
        <taxon>Bacillota</taxon>
        <taxon>Bacilli</taxon>
        <taxon>Bacillales</taxon>
        <taxon>Staphylococcaceae</taxon>
        <taxon>Staphylococcus</taxon>
    </lineage>
</organism>
<reference key="1">
    <citation type="journal article" date="2004" name="Proc. Natl. Acad. Sci. U.S.A.">
        <title>Complete genomes of two clinical Staphylococcus aureus strains: evidence for the rapid evolution of virulence and drug resistance.</title>
        <authorList>
            <person name="Holden M.T.G."/>
            <person name="Feil E.J."/>
            <person name="Lindsay J.A."/>
            <person name="Peacock S.J."/>
            <person name="Day N.P.J."/>
            <person name="Enright M.C."/>
            <person name="Foster T.J."/>
            <person name="Moore C.E."/>
            <person name="Hurst L."/>
            <person name="Atkin R."/>
            <person name="Barron A."/>
            <person name="Bason N."/>
            <person name="Bentley S.D."/>
            <person name="Chillingworth C."/>
            <person name="Chillingworth T."/>
            <person name="Churcher C."/>
            <person name="Clark L."/>
            <person name="Corton C."/>
            <person name="Cronin A."/>
            <person name="Doggett J."/>
            <person name="Dowd L."/>
            <person name="Feltwell T."/>
            <person name="Hance Z."/>
            <person name="Harris B."/>
            <person name="Hauser H."/>
            <person name="Holroyd S."/>
            <person name="Jagels K."/>
            <person name="James K.D."/>
            <person name="Lennard N."/>
            <person name="Line A."/>
            <person name="Mayes R."/>
            <person name="Moule S."/>
            <person name="Mungall K."/>
            <person name="Ormond D."/>
            <person name="Quail M.A."/>
            <person name="Rabbinowitsch E."/>
            <person name="Rutherford K.M."/>
            <person name="Sanders M."/>
            <person name="Sharp S."/>
            <person name="Simmonds M."/>
            <person name="Stevens K."/>
            <person name="Whitehead S."/>
            <person name="Barrell B.G."/>
            <person name="Spratt B.G."/>
            <person name="Parkhill J."/>
        </authorList>
    </citation>
    <scope>NUCLEOTIDE SEQUENCE [LARGE SCALE GENOMIC DNA]</scope>
    <source>
        <strain>MRSA252</strain>
    </source>
</reference>
<protein>
    <recommendedName>
        <fullName evidence="1">Protein SprT-like</fullName>
    </recommendedName>
</protein>
<accession>Q6GF11</accession>
<comment type="cofactor">
    <cofactor evidence="1">
        <name>Zn(2+)</name>
        <dbReference type="ChEBI" id="CHEBI:29105"/>
    </cofactor>
    <text evidence="1">Binds 1 zinc ion.</text>
</comment>
<comment type="subcellular location">
    <subcellularLocation>
        <location evidence="1">Cytoplasm</location>
    </subcellularLocation>
</comment>
<comment type="similarity">
    <text evidence="1">Belongs to the SprT family.</text>
</comment>
<name>SPRTL_STAAR</name>
<keyword id="KW-0963">Cytoplasm</keyword>
<keyword id="KW-0479">Metal-binding</keyword>
<keyword id="KW-0862">Zinc</keyword>
<gene>
    <name type="ordered locus">SAR2150</name>
</gene>
<evidence type="ECO:0000255" key="1">
    <source>
        <dbReference type="HAMAP-Rule" id="MF_00745"/>
    </source>
</evidence>
<dbReference type="EMBL" id="BX571856">
    <property type="protein sequence ID" value="CAG41131.1"/>
    <property type="molecule type" value="Genomic_DNA"/>
</dbReference>
<dbReference type="RefSeq" id="WP_001058376.1">
    <property type="nucleotide sequence ID" value="NC_002952.2"/>
</dbReference>
<dbReference type="KEGG" id="sar:SAR2150"/>
<dbReference type="HOGENOM" id="CLU_123820_0_0_9"/>
<dbReference type="Proteomes" id="UP000000596">
    <property type="component" value="Chromosome"/>
</dbReference>
<dbReference type="GO" id="GO:0005737">
    <property type="term" value="C:cytoplasm"/>
    <property type="evidence" value="ECO:0007669"/>
    <property type="project" value="UniProtKB-SubCell"/>
</dbReference>
<dbReference type="GO" id="GO:0008270">
    <property type="term" value="F:zinc ion binding"/>
    <property type="evidence" value="ECO:0007669"/>
    <property type="project" value="UniProtKB-UniRule"/>
</dbReference>
<dbReference type="GO" id="GO:0006950">
    <property type="term" value="P:response to stress"/>
    <property type="evidence" value="ECO:0007669"/>
    <property type="project" value="UniProtKB-ARBA"/>
</dbReference>
<dbReference type="HAMAP" id="MF_00745">
    <property type="entry name" value="SprT_like"/>
    <property type="match status" value="1"/>
</dbReference>
<dbReference type="InterPro" id="IPR006640">
    <property type="entry name" value="SprT-like_domain"/>
</dbReference>
<dbReference type="InterPro" id="IPR035240">
    <property type="entry name" value="SprT_Zn_ribbon"/>
</dbReference>
<dbReference type="InterPro" id="IPR023524">
    <property type="entry name" value="Uncharacterised_SprT-like"/>
</dbReference>
<dbReference type="NCBIfam" id="NF003339">
    <property type="entry name" value="PRK04351.1"/>
    <property type="match status" value="1"/>
</dbReference>
<dbReference type="Pfam" id="PF10263">
    <property type="entry name" value="SprT-like"/>
    <property type="match status" value="1"/>
</dbReference>
<dbReference type="Pfam" id="PF17283">
    <property type="entry name" value="Zn_ribbon_SprT"/>
    <property type="match status" value="1"/>
</dbReference>
<dbReference type="SMART" id="SM00731">
    <property type="entry name" value="SprT"/>
    <property type="match status" value="1"/>
</dbReference>
<proteinExistence type="inferred from homology"/>